<feature type="chain" id="PRO_0000114359" description="Cell division protein FtsZ">
    <location>
        <begin position="1"/>
        <end position="416"/>
    </location>
</feature>
<feature type="region of interest" description="Disordered" evidence="2">
    <location>
        <begin position="319"/>
        <end position="416"/>
    </location>
</feature>
<feature type="compositionally biased region" description="Polar residues" evidence="2">
    <location>
        <begin position="319"/>
        <end position="335"/>
    </location>
</feature>
<feature type="compositionally biased region" description="Acidic residues" evidence="2">
    <location>
        <begin position="376"/>
        <end position="392"/>
    </location>
</feature>
<feature type="compositionally biased region" description="Basic and acidic residues" evidence="2">
    <location>
        <begin position="404"/>
        <end position="416"/>
    </location>
</feature>
<feature type="binding site" evidence="1">
    <location>
        <begin position="20"/>
        <end position="24"/>
    </location>
    <ligand>
        <name>GTP</name>
        <dbReference type="ChEBI" id="CHEBI:37565"/>
    </ligand>
</feature>
<feature type="binding site" evidence="1">
    <location>
        <begin position="107"/>
        <end position="109"/>
    </location>
    <ligand>
        <name>GTP</name>
        <dbReference type="ChEBI" id="CHEBI:37565"/>
    </ligand>
</feature>
<feature type="binding site" evidence="1">
    <location>
        <position position="138"/>
    </location>
    <ligand>
        <name>GTP</name>
        <dbReference type="ChEBI" id="CHEBI:37565"/>
    </ligand>
</feature>
<feature type="binding site" evidence="1">
    <location>
        <position position="142"/>
    </location>
    <ligand>
        <name>GTP</name>
        <dbReference type="ChEBI" id="CHEBI:37565"/>
    </ligand>
</feature>
<feature type="binding site" evidence="1">
    <location>
        <position position="186"/>
    </location>
    <ligand>
        <name>GTP</name>
        <dbReference type="ChEBI" id="CHEBI:37565"/>
    </ligand>
</feature>
<organism>
    <name type="scientific">Kocuria rhizophila (strain ATCC 9341 / DSM 348 / NBRC 103217 / DC2201)</name>
    <dbReference type="NCBI Taxonomy" id="378753"/>
    <lineage>
        <taxon>Bacteria</taxon>
        <taxon>Bacillati</taxon>
        <taxon>Actinomycetota</taxon>
        <taxon>Actinomycetes</taxon>
        <taxon>Micrococcales</taxon>
        <taxon>Micrococcaceae</taxon>
        <taxon>Kocuria</taxon>
    </lineage>
</organism>
<protein>
    <recommendedName>
        <fullName evidence="1">Cell division protein FtsZ</fullName>
    </recommendedName>
</protein>
<sequence>MDSSTPQNYLAVIKVVGIGGGGVNAVNRMIEEGLRGVEFIAINTDAQALLMSDADVKLDVGRELTRGLGAGANPDVGRQAAEDHEEEIQEVLKGADMVFVTAGEGGGTGTGGAPVVARIARSLGALTIGVVTRPFTFEGRRRSNQAENGIETLRDEVDTLIVIPNDRLLSISDRNVSMLDAFKSADQVLLSGVSGITDLITTPGLINLDFADVKSVMQGAGSALMGIGSAQGEDRAVKAAELAIASPLLEASIDGAHGVLLSIQGGSDLGLFEINEAARLVQEVAHPEANIIFGAVIDDALGDQARVTVIAAGFDSVSQETNANNSSPAQRQAESTRAAFGGDASRPSGLGRSPQRGGNSYGAPAAGFGSRQGQGQDDDIPDDAGFDVDLPAEADAPSSSNTSARKDSLDFPDFLK</sequence>
<keyword id="KW-0131">Cell cycle</keyword>
<keyword id="KW-0132">Cell division</keyword>
<keyword id="KW-0963">Cytoplasm</keyword>
<keyword id="KW-0342">GTP-binding</keyword>
<keyword id="KW-0547">Nucleotide-binding</keyword>
<keyword id="KW-1185">Reference proteome</keyword>
<keyword id="KW-0717">Septation</keyword>
<comment type="function">
    <text evidence="1">Essential cell division protein that forms a contractile ring structure (Z ring) at the future cell division site. The regulation of the ring assembly controls the timing and the location of cell division. One of the functions of the FtsZ ring is to recruit other cell division proteins to the septum to produce a new cell wall between the dividing cells. Binds GTP and shows GTPase activity.</text>
</comment>
<comment type="subunit">
    <text evidence="1">Homodimer. Polymerizes to form a dynamic ring structure in a strictly GTP-dependent manner. Interacts directly with several other division proteins.</text>
</comment>
<comment type="subcellular location">
    <subcellularLocation>
        <location evidence="1">Cytoplasm</location>
    </subcellularLocation>
    <text evidence="1">Assembles at midcell at the inner surface of the cytoplasmic membrane.</text>
</comment>
<comment type="similarity">
    <text evidence="1">Belongs to the FtsZ family.</text>
</comment>
<proteinExistence type="inferred from homology"/>
<dbReference type="EMBL" id="AP009152">
    <property type="protein sequence ID" value="BAG29826.1"/>
    <property type="molecule type" value="Genomic_DNA"/>
</dbReference>
<dbReference type="EMBL" id="U10878">
    <property type="protein sequence ID" value="AAC44398.1"/>
    <property type="molecule type" value="Genomic_DNA"/>
</dbReference>
<dbReference type="PIR" id="S60763">
    <property type="entry name" value="S60763"/>
</dbReference>
<dbReference type="RefSeq" id="WP_012398547.1">
    <property type="nucleotide sequence ID" value="NC_010617.1"/>
</dbReference>
<dbReference type="SMR" id="P45499"/>
<dbReference type="STRING" id="378753.KRH_14790"/>
<dbReference type="KEGG" id="krh:KRH_14790"/>
<dbReference type="eggNOG" id="COG0206">
    <property type="taxonomic scope" value="Bacteria"/>
</dbReference>
<dbReference type="HOGENOM" id="CLU_024865_0_5_11"/>
<dbReference type="OrthoDB" id="9813375at2"/>
<dbReference type="Proteomes" id="UP000008838">
    <property type="component" value="Chromosome"/>
</dbReference>
<dbReference type="GO" id="GO:0032153">
    <property type="term" value="C:cell division site"/>
    <property type="evidence" value="ECO:0007669"/>
    <property type="project" value="UniProtKB-UniRule"/>
</dbReference>
<dbReference type="GO" id="GO:0005737">
    <property type="term" value="C:cytoplasm"/>
    <property type="evidence" value="ECO:0007669"/>
    <property type="project" value="UniProtKB-SubCell"/>
</dbReference>
<dbReference type="GO" id="GO:0005525">
    <property type="term" value="F:GTP binding"/>
    <property type="evidence" value="ECO:0007669"/>
    <property type="project" value="UniProtKB-UniRule"/>
</dbReference>
<dbReference type="GO" id="GO:0003924">
    <property type="term" value="F:GTPase activity"/>
    <property type="evidence" value="ECO:0007669"/>
    <property type="project" value="UniProtKB-UniRule"/>
</dbReference>
<dbReference type="GO" id="GO:0000917">
    <property type="term" value="P:division septum assembly"/>
    <property type="evidence" value="ECO:0007669"/>
    <property type="project" value="UniProtKB-KW"/>
</dbReference>
<dbReference type="GO" id="GO:0043093">
    <property type="term" value="P:FtsZ-dependent cytokinesis"/>
    <property type="evidence" value="ECO:0007669"/>
    <property type="project" value="UniProtKB-UniRule"/>
</dbReference>
<dbReference type="GO" id="GO:0051258">
    <property type="term" value="P:protein polymerization"/>
    <property type="evidence" value="ECO:0007669"/>
    <property type="project" value="UniProtKB-UniRule"/>
</dbReference>
<dbReference type="CDD" id="cd02201">
    <property type="entry name" value="FtsZ_type1"/>
    <property type="match status" value="1"/>
</dbReference>
<dbReference type="FunFam" id="3.40.50.1440:FF:000001">
    <property type="entry name" value="Cell division protein FtsZ"/>
    <property type="match status" value="1"/>
</dbReference>
<dbReference type="Gene3D" id="3.30.1330.20">
    <property type="entry name" value="Tubulin/FtsZ, C-terminal domain"/>
    <property type="match status" value="1"/>
</dbReference>
<dbReference type="Gene3D" id="3.40.50.1440">
    <property type="entry name" value="Tubulin/FtsZ, GTPase domain"/>
    <property type="match status" value="1"/>
</dbReference>
<dbReference type="HAMAP" id="MF_00909">
    <property type="entry name" value="FtsZ"/>
    <property type="match status" value="1"/>
</dbReference>
<dbReference type="InterPro" id="IPR000158">
    <property type="entry name" value="Cell_div_FtsZ"/>
</dbReference>
<dbReference type="InterPro" id="IPR020805">
    <property type="entry name" value="Cell_div_FtsZ_CS"/>
</dbReference>
<dbReference type="InterPro" id="IPR045061">
    <property type="entry name" value="FtsZ/CetZ"/>
</dbReference>
<dbReference type="InterPro" id="IPR024757">
    <property type="entry name" value="FtsZ_C"/>
</dbReference>
<dbReference type="InterPro" id="IPR008280">
    <property type="entry name" value="Tub_FtsZ_C"/>
</dbReference>
<dbReference type="InterPro" id="IPR037103">
    <property type="entry name" value="Tubulin/FtsZ-like_C"/>
</dbReference>
<dbReference type="InterPro" id="IPR018316">
    <property type="entry name" value="Tubulin/FtsZ_2-layer-sand-dom"/>
</dbReference>
<dbReference type="InterPro" id="IPR036525">
    <property type="entry name" value="Tubulin/FtsZ_GTPase_sf"/>
</dbReference>
<dbReference type="InterPro" id="IPR003008">
    <property type="entry name" value="Tubulin_FtsZ_GTPase"/>
</dbReference>
<dbReference type="NCBIfam" id="TIGR00065">
    <property type="entry name" value="ftsZ"/>
    <property type="match status" value="1"/>
</dbReference>
<dbReference type="PANTHER" id="PTHR30314">
    <property type="entry name" value="CELL DIVISION PROTEIN FTSZ-RELATED"/>
    <property type="match status" value="1"/>
</dbReference>
<dbReference type="PANTHER" id="PTHR30314:SF3">
    <property type="entry name" value="MITOCHONDRIAL DIVISION PROTEIN FSZA"/>
    <property type="match status" value="1"/>
</dbReference>
<dbReference type="Pfam" id="PF12327">
    <property type="entry name" value="FtsZ_C"/>
    <property type="match status" value="1"/>
</dbReference>
<dbReference type="Pfam" id="PF00091">
    <property type="entry name" value="Tubulin"/>
    <property type="match status" value="1"/>
</dbReference>
<dbReference type="PRINTS" id="PR00423">
    <property type="entry name" value="CELLDVISFTSZ"/>
</dbReference>
<dbReference type="SMART" id="SM00864">
    <property type="entry name" value="Tubulin"/>
    <property type="match status" value="1"/>
</dbReference>
<dbReference type="SMART" id="SM00865">
    <property type="entry name" value="Tubulin_C"/>
    <property type="match status" value="1"/>
</dbReference>
<dbReference type="SUPFAM" id="SSF55307">
    <property type="entry name" value="Tubulin C-terminal domain-like"/>
    <property type="match status" value="1"/>
</dbReference>
<dbReference type="SUPFAM" id="SSF52490">
    <property type="entry name" value="Tubulin nucleotide-binding domain-like"/>
    <property type="match status" value="1"/>
</dbReference>
<dbReference type="PROSITE" id="PS01134">
    <property type="entry name" value="FTSZ_1"/>
    <property type="match status" value="1"/>
</dbReference>
<dbReference type="PROSITE" id="PS01135">
    <property type="entry name" value="FTSZ_2"/>
    <property type="match status" value="1"/>
</dbReference>
<name>FTSZ_KOCRD</name>
<accession>P45499</accession>
<accession>B2GJP5</accession>
<reference key="1">
    <citation type="journal article" date="2008" name="J. Bacteriol.">
        <title>Complete genome sequence of the soil actinomycete Kocuria rhizophila.</title>
        <authorList>
            <person name="Takarada H."/>
            <person name="Sekine M."/>
            <person name="Kosugi H."/>
            <person name="Matsuo Y."/>
            <person name="Fujisawa T."/>
            <person name="Omata S."/>
            <person name="Kishi E."/>
            <person name="Shimizu A."/>
            <person name="Tsukatani N."/>
            <person name="Tanikawa S."/>
            <person name="Fujita N."/>
            <person name="Harayama S."/>
        </authorList>
    </citation>
    <scope>NUCLEOTIDE SEQUENCE [LARGE SCALE GENOMIC DNA]</scope>
    <source>
        <strain>ATCC 9341 / DSM 348 / NBRC 103217 / DC2201</strain>
    </source>
</reference>
<reference key="2">
    <citation type="journal article" date="1994" name="Mol. Microbiol.">
        <title>Growth and viability of Streptomyces coelicolor mutant for the cell division gene ftsZ.</title>
        <authorList>
            <person name="McCormick J.R."/>
            <person name="Su E.P."/>
            <person name="Driks A."/>
            <person name="Losick R."/>
        </authorList>
    </citation>
    <scope>NUCLEOTIDE SEQUENCE [GENOMIC DNA] OF 43-212</scope>
</reference>
<evidence type="ECO:0000255" key="1">
    <source>
        <dbReference type="HAMAP-Rule" id="MF_00909"/>
    </source>
</evidence>
<evidence type="ECO:0000256" key="2">
    <source>
        <dbReference type="SAM" id="MobiDB-lite"/>
    </source>
</evidence>
<gene>
    <name evidence="1" type="primary">ftsZ</name>
    <name type="ordered locus">KRH_14790</name>
</gene>